<dbReference type="EMBL" id="FO080154">
    <property type="protein sequence ID" value="CCD61660.1"/>
    <property type="molecule type" value="Genomic_DNA"/>
</dbReference>
<dbReference type="PIR" id="T15312">
    <property type="entry name" value="T15312"/>
</dbReference>
<dbReference type="RefSeq" id="NP_494776.2">
    <property type="nucleotide sequence ID" value="NM_062375.4"/>
</dbReference>
<dbReference type="SMR" id="Q10921"/>
<dbReference type="STRING" id="6239.B0286.1.3"/>
<dbReference type="PaxDb" id="6239-B0286.1"/>
<dbReference type="PeptideAtlas" id="Q10921"/>
<dbReference type="EnsemblMetazoa" id="B0286.1.1">
    <property type="protein sequence ID" value="B0286.1.1"/>
    <property type="gene ID" value="WBGene00015115"/>
</dbReference>
<dbReference type="EnsemblMetazoa" id="B0286.1.2">
    <property type="protein sequence ID" value="B0286.1.2"/>
    <property type="gene ID" value="WBGene00015115"/>
</dbReference>
<dbReference type="GeneID" id="173774"/>
<dbReference type="KEGG" id="cel:CELE_B0286.1"/>
<dbReference type="UCSC" id="B0286.1">
    <property type="organism name" value="c. elegans"/>
</dbReference>
<dbReference type="AGR" id="WB:WBGene00015115"/>
<dbReference type="CTD" id="173774"/>
<dbReference type="WormBase" id="B0286.1">
    <property type="protein sequence ID" value="CE30066"/>
    <property type="gene ID" value="WBGene00015115"/>
</dbReference>
<dbReference type="eggNOG" id="ENOG502TIWU">
    <property type="taxonomic scope" value="Eukaryota"/>
</dbReference>
<dbReference type="HOGENOM" id="CLU_1205707_0_0_1"/>
<dbReference type="InParanoid" id="Q10921"/>
<dbReference type="OMA" id="CHEMVRK"/>
<dbReference type="OrthoDB" id="5861797at2759"/>
<dbReference type="PRO" id="PR:Q10921"/>
<dbReference type="Proteomes" id="UP000001940">
    <property type="component" value="Chromosome II"/>
</dbReference>
<dbReference type="Bgee" id="WBGene00015115">
    <property type="expression patterns" value="Expressed in pharyngeal muscle cell (C elegans) and 3 other cell types or tissues"/>
</dbReference>
<name>YWQ1_CAEEL</name>
<accession>Q10921</accession>
<feature type="chain" id="PRO_0000065059" description="Uncharacterized protein B0286.1">
    <location>
        <begin position="1"/>
        <end position="230"/>
    </location>
</feature>
<feature type="region of interest" description="Disordered" evidence="1">
    <location>
        <begin position="63"/>
        <end position="90"/>
    </location>
</feature>
<feature type="region of interest" description="Disordered" evidence="1">
    <location>
        <begin position="194"/>
        <end position="230"/>
    </location>
</feature>
<feature type="compositionally biased region" description="Basic and acidic residues" evidence="1">
    <location>
        <begin position="194"/>
        <end position="217"/>
    </location>
</feature>
<protein>
    <recommendedName>
        <fullName>Uncharacterized protein B0286.1</fullName>
    </recommendedName>
</protein>
<evidence type="ECO:0000256" key="1">
    <source>
        <dbReference type="SAM" id="MobiDB-lite"/>
    </source>
</evidence>
<proteinExistence type="predicted"/>
<sequence>MLQKEHASALEKLRVIWLHKKKIEAELQSRHAESTKFLSKIKLKESEIYGLKTKQETCQKELTDCQTLKEEPKEQKKENNKNDENSKKTIEKYEQEIAGLKEKIEGLEEKVKNNYSDENSSLKEELKQCETRIRQLTGGGAIEHYSQNETAHFSRNQKADEPLFFDRGNIQHHIPQKLLLGRELVQTLEEAKVKKLEEREQMDKHPQDRDNKDKEVNEQPDNEEQDYKEH</sequence>
<reference key="1">
    <citation type="journal article" date="1998" name="Science">
        <title>Genome sequence of the nematode C. elegans: a platform for investigating biology.</title>
        <authorList>
            <consortium name="The C. elegans sequencing consortium"/>
        </authorList>
    </citation>
    <scope>NUCLEOTIDE SEQUENCE [LARGE SCALE GENOMIC DNA]</scope>
    <source>
        <strain>Bristol N2</strain>
    </source>
</reference>
<keyword id="KW-1185">Reference proteome</keyword>
<organism>
    <name type="scientific">Caenorhabditis elegans</name>
    <dbReference type="NCBI Taxonomy" id="6239"/>
    <lineage>
        <taxon>Eukaryota</taxon>
        <taxon>Metazoa</taxon>
        <taxon>Ecdysozoa</taxon>
        <taxon>Nematoda</taxon>
        <taxon>Chromadorea</taxon>
        <taxon>Rhabditida</taxon>
        <taxon>Rhabditina</taxon>
        <taxon>Rhabditomorpha</taxon>
        <taxon>Rhabditoidea</taxon>
        <taxon>Rhabditidae</taxon>
        <taxon>Peloderinae</taxon>
        <taxon>Caenorhabditis</taxon>
    </lineage>
</organism>
<gene>
    <name type="ORF">B0286.1</name>
</gene>